<geneLocation type="chloroplast"/>
<keyword id="KW-0150">Chloroplast</keyword>
<keyword id="KW-0472">Membrane</keyword>
<keyword id="KW-0602">Photosynthesis</keyword>
<keyword id="KW-0604">Photosystem II</keyword>
<keyword id="KW-0934">Plastid</keyword>
<keyword id="KW-0674">Reaction center</keyword>
<keyword id="KW-0793">Thylakoid</keyword>
<keyword id="KW-0812">Transmembrane</keyword>
<keyword id="KW-1133">Transmembrane helix</keyword>
<comment type="function">
    <text evidence="1">May control the interaction of photosystem II (PSII) cores with the light-harvesting antenna, regulates electron flow through the 2 photosystem reaction centers. PSII is a light-driven water plastoquinone oxidoreductase, using light energy to abstract electrons from H(2)O, generating a proton gradient subsequently used for ATP formation.</text>
</comment>
<comment type="subunit">
    <text evidence="1">PSII is composed of 1 copy each of membrane proteins PsbA, PsbB, PsbC, PsbD, PsbE, PsbF, PsbH, PsbI, PsbJ, PsbK, PsbL, PsbM, PsbT, PsbY, PsbZ, Psb30/Ycf12, at least 3 peripheral proteins of the oxygen-evolving complex and a large number of cofactors. It forms dimeric complexes.</text>
</comment>
<comment type="subcellular location">
    <subcellularLocation>
        <location evidence="1">Plastid</location>
        <location evidence="1">Chloroplast thylakoid membrane</location>
        <topology evidence="1">Multi-pass membrane protein</topology>
    </subcellularLocation>
</comment>
<comment type="similarity">
    <text evidence="1">Belongs to the PsbZ family.</text>
</comment>
<feature type="chain" id="PRO_0000217700" description="Photosystem II reaction center protein Z">
    <location>
        <begin position="1"/>
        <end position="65"/>
    </location>
</feature>
<feature type="transmembrane region" description="Helical" evidence="1">
    <location>
        <begin position="11"/>
        <end position="31"/>
    </location>
</feature>
<feature type="transmembrane region" description="Helical" evidence="1">
    <location>
        <begin position="44"/>
        <end position="64"/>
    </location>
</feature>
<gene>
    <name evidence="1" type="primary">psbZ</name>
    <name type="synonym">ycf9</name>
</gene>
<sequence>MLLFTFTFQALVLALIIFSFILVLTLPVIFASPKGWENNKSRIWLACRFWFFLVFLIGILDGIFL</sequence>
<proteinExistence type="inferred from homology"/>
<accession>P32095</accession>
<evidence type="ECO:0000255" key="1">
    <source>
        <dbReference type="HAMAP-Rule" id="MF_00644"/>
    </source>
</evidence>
<dbReference type="EMBL" id="Z11874">
    <property type="status" value="NOT_ANNOTATED_CDS"/>
    <property type="molecule type" value="Genomic_DNA"/>
</dbReference>
<dbReference type="EMBL" id="X70810">
    <property type="protein sequence ID" value="CAA50118.1"/>
    <property type="molecule type" value="Genomic_DNA"/>
</dbReference>
<dbReference type="PIR" id="S34538">
    <property type="entry name" value="S34538"/>
</dbReference>
<dbReference type="RefSeq" id="NP_041931.1">
    <property type="nucleotide sequence ID" value="NC_001603.2"/>
</dbReference>
<dbReference type="SMR" id="P32095"/>
<dbReference type="GeneID" id="807498"/>
<dbReference type="GO" id="GO:0009535">
    <property type="term" value="C:chloroplast thylakoid membrane"/>
    <property type="evidence" value="ECO:0007669"/>
    <property type="project" value="UniProtKB-SubCell"/>
</dbReference>
<dbReference type="GO" id="GO:0009539">
    <property type="term" value="C:photosystem II reaction center"/>
    <property type="evidence" value="ECO:0007669"/>
    <property type="project" value="InterPro"/>
</dbReference>
<dbReference type="GO" id="GO:0015979">
    <property type="term" value="P:photosynthesis"/>
    <property type="evidence" value="ECO:0007669"/>
    <property type="project" value="UniProtKB-UniRule"/>
</dbReference>
<dbReference type="GO" id="GO:0042549">
    <property type="term" value="P:photosystem II stabilization"/>
    <property type="evidence" value="ECO:0007669"/>
    <property type="project" value="InterPro"/>
</dbReference>
<dbReference type="Gene3D" id="1.10.287.740">
    <property type="entry name" value="Photosystem II PsbZ, reaction centre"/>
    <property type="match status" value="1"/>
</dbReference>
<dbReference type="HAMAP" id="MF_00644">
    <property type="entry name" value="PSII_PsbZ"/>
    <property type="match status" value="1"/>
</dbReference>
<dbReference type="InterPro" id="IPR002644">
    <property type="entry name" value="PSII_PsbZ"/>
</dbReference>
<dbReference type="InterPro" id="IPR036512">
    <property type="entry name" value="PSII_PsbZ_sf"/>
</dbReference>
<dbReference type="NCBIfam" id="TIGR03043">
    <property type="entry name" value="PS_II_psbZ"/>
    <property type="match status" value="1"/>
</dbReference>
<dbReference type="PANTHER" id="PTHR34971">
    <property type="entry name" value="PHOTOSYSTEM II REACTION CENTER PROTEIN Z"/>
    <property type="match status" value="1"/>
</dbReference>
<dbReference type="PANTHER" id="PTHR34971:SF2">
    <property type="entry name" value="PHOTOSYSTEM II REACTION CENTER PROTEIN Z"/>
    <property type="match status" value="1"/>
</dbReference>
<dbReference type="Pfam" id="PF01737">
    <property type="entry name" value="Ycf9"/>
    <property type="match status" value="1"/>
</dbReference>
<dbReference type="SUPFAM" id="SSF161055">
    <property type="entry name" value="PsbZ-like"/>
    <property type="match status" value="1"/>
</dbReference>
<organism>
    <name type="scientific">Euglena gracilis</name>
    <dbReference type="NCBI Taxonomy" id="3039"/>
    <lineage>
        <taxon>Eukaryota</taxon>
        <taxon>Discoba</taxon>
        <taxon>Euglenozoa</taxon>
        <taxon>Euglenida</taxon>
        <taxon>Spirocuta</taxon>
        <taxon>Euglenophyceae</taxon>
        <taxon>Euglenales</taxon>
        <taxon>Euglenaceae</taxon>
        <taxon>Euglena</taxon>
    </lineage>
</organism>
<reference key="1">
    <citation type="journal article" date="1993" name="Nucleic Acids Res.">
        <title>Complete sequence of Euglena gracilis chloroplast DNA.</title>
        <authorList>
            <person name="Hallick R.B."/>
            <person name="Hong L."/>
            <person name="Drager R.G."/>
            <person name="Favreau M.R."/>
            <person name="Monfort A."/>
            <person name="Orsat B."/>
            <person name="Spielmann A."/>
            <person name="Stutz E."/>
        </authorList>
    </citation>
    <scope>NUCLEOTIDE SEQUENCE [LARGE SCALE GENOMIC DNA]</scope>
    <source>
        <strain>Z / UTEX 753</strain>
    </source>
</reference>
<protein>
    <recommendedName>
        <fullName evidence="1">Photosystem II reaction center protein Z</fullName>
        <shortName evidence="1">PSII-Z</shortName>
    </recommendedName>
</protein>
<name>PSBZ_EUGGR</name>